<sequence>MSLIINTFYSNKEIFLQELISNASDALDKIRYESLTDPSKLDGGKELKIDIIPNPRECILTLVNTGIGMTKADLINNLGAIAKSGTEAFMEAFQSCAEISMIGQFGVGFYSAYLVAEKVAITKHNDEEQYSWVSSAGSSFTLHVDHGEPIDRDTKVILHLKEDQTEYLEERWVKEVVKKHPQFIGCLIAVYLEKEPEKEISDDEEEKGEKEEEDKDDKEKPKTEDVGSDEEDDTDKNNKKKTKKIKEKYTDREELNQTKPIWTRNPDDITQEECGEFYKSLTSAWEDHLAVKQFPVEEQEENEQLCVHHVWIMDSFDDLMPEYVGFVREDKENNKKLDEVFSKISWLGIHEDSINWRHLSELLWSHTFQSGDEMTSLSEYVSCMKEAQKSICDIIGECKEQVANSAFVEQEWKKGFEVIYMSEPIDEYCVQQLKEFDGKSLLSVTKEGLELPEDEEEKKIMEESNVKFENLCRLMKEILDKKVERVTISSRLVSSPCRIVTSTYS</sequence>
<evidence type="ECO:0000250" key="1"/>
<evidence type="ECO:0000256" key="2">
    <source>
        <dbReference type="SAM" id="MobiDB-lite"/>
    </source>
</evidence>
<evidence type="ECO:0000305" key="3"/>
<proteinExistence type="uncertain"/>
<feature type="chain" id="PRO_0000349174" description="Putative heat shock protein HSP 90-beta 4">
    <location>
        <begin position="1"/>
        <end position="505"/>
    </location>
</feature>
<feature type="region of interest" description="Disordered" evidence="2">
    <location>
        <begin position="197"/>
        <end position="248"/>
    </location>
</feature>
<feature type="compositionally biased region" description="Acidic residues" evidence="2">
    <location>
        <begin position="200"/>
        <end position="216"/>
    </location>
</feature>
<feature type="binding site" evidence="1">
    <location>
        <position position="22"/>
    </location>
    <ligand>
        <name>ATP</name>
        <dbReference type="ChEBI" id="CHEBI:30616"/>
    </ligand>
</feature>
<feature type="binding site" evidence="1">
    <location>
        <position position="83"/>
    </location>
    <ligand>
        <name>ATP</name>
        <dbReference type="ChEBI" id="CHEBI:30616"/>
    </ligand>
</feature>
<feature type="binding site" evidence="1">
    <location>
        <position position="109"/>
    </location>
    <ligand>
        <name>ATP</name>
        <dbReference type="ChEBI" id="CHEBI:30616"/>
    </ligand>
</feature>
<comment type="function">
    <text evidence="1">Putative molecular chaperone that may promote the maturation, structural maintenance and proper regulation of specific target proteins.</text>
</comment>
<comment type="subunit">
    <text evidence="1">Homodimer.</text>
</comment>
<comment type="subcellular location">
    <subcellularLocation>
        <location evidence="1">Cytoplasm</location>
    </subcellularLocation>
</comment>
<comment type="similarity">
    <text evidence="3">Belongs to the heat shock protein 90 family.</text>
</comment>
<comment type="caution">
    <text evidence="3">Could be the product of a pseudogene.</text>
</comment>
<accession>Q58FF6</accession>
<name>H90B4_HUMAN</name>
<dbReference type="EMBL" id="AY956765">
    <property type="protein sequence ID" value="AAX38252.1"/>
    <property type="molecule type" value="mRNA"/>
</dbReference>
<dbReference type="SMR" id="Q58FF6"/>
<dbReference type="FunCoup" id="Q58FF6">
    <property type="interactions" value="510"/>
</dbReference>
<dbReference type="IntAct" id="Q58FF6">
    <property type="interactions" value="92"/>
</dbReference>
<dbReference type="GlyGen" id="Q58FF6">
    <property type="glycosylation" value="2 sites, 1 N-linked glycan (1 site), 1 O-linked glycan (1 site)"/>
</dbReference>
<dbReference type="iPTMnet" id="Q58FF6"/>
<dbReference type="PhosphoSitePlus" id="Q58FF6"/>
<dbReference type="SwissPalm" id="Q58FF6"/>
<dbReference type="BioMuta" id="HGNC:32538"/>
<dbReference type="DMDM" id="74722491"/>
<dbReference type="jPOST" id="Q58FF6"/>
<dbReference type="MassIVE" id="Q58FF6"/>
<dbReference type="ProteomicsDB" id="62621"/>
<dbReference type="Pumba" id="Q58FF6"/>
<dbReference type="AGR" id="HGNC:32538"/>
<dbReference type="GeneCards" id="HSP90AB4P"/>
<dbReference type="HGNC" id="HGNC:32538">
    <property type="gene designation" value="HSP90AB4P"/>
</dbReference>
<dbReference type="neXtProt" id="NX_Q58FF6"/>
<dbReference type="InParanoid" id="Q58FF6"/>
<dbReference type="PAN-GO" id="Q58FF6">
    <property type="GO annotations" value="10 GO annotations based on evolutionary models"/>
</dbReference>
<dbReference type="PhylomeDB" id="Q58FF6"/>
<dbReference type="PathwayCommons" id="Q58FF6"/>
<dbReference type="SignaLink" id="Q58FF6"/>
<dbReference type="Pharos" id="Q58FF6">
    <property type="development level" value="Tdark"/>
</dbReference>
<dbReference type="PRO" id="PR:Q58FF6"/>
<dbReference type="Proteomes" id="UP000005640">
    <property type="component" value="Unplaced"/>
</dbReference>
<dbReference type="RNAct" id="Q58FF6">
    <property type="molecule type" value="protein"/>
</dbReference>
<dbReference type="GO" id="GO:0005829">
    <property type="term" value="C:cytosol"/>
    <property type="evidence" value="ECO:0000318"/>
    <property type="project" value="GO_Central"/>
</dbReference>
<dbReference type="GO" id="GO:0048471">
    <property type="term" value="C:perinuclear region of cytoplasm"/>
    <property type="evidence" value="ECO:0000318"/>
    <property type="project" value="GO_Central"/>
</dbReference>
<dbReference type="GO" id="GO:0005886">
    <property type="term" value="C:plasma membrane"/>
    <property type="evidence" value="ECO:0000318"/>
    <property type="project" value="GO_Central"/>
</dbReference>
<dbReference type="GO" id="GO:0032991">
    <property type="term" value="C:protein-containing complex"/>
    <property type="evidence" value="ECO:0000318"/>
    <property type="project" value="GO_Central"/>
</dbReference>
<dbReference type="GO" id="GO:0005524">
    <property type="term" value="F:ATP binding"/>
    <property type="evidence" value="ECO:0000318"/>
    <property type="project" value="GO_Central"/>
</dbReference>
<dbReference type="GO" id="GO:0016887">
    <property type="term" value="F:ATP hydrolysis activity"/>
    <property type="evidence" value="ECO:0000318"/>
    <property type="project" value="GO_Central"/>
</dbReference>
<dbReference type="GO" id="GO:0140662">
    <property type="term" value="F:ATP-dependent protein folding chaperone"/>
    <property type="evidence" value="ECO:0007669"/>
    <property type="project" value="InterPro"/>
</dbReference>
<dbReference type="GO" id="GO:0051082">
    <property type="term" value="F:unfolded protein binding"/>
    <property type="evidence" value="ECO:0000318"/>
    <property type="project" value="GO_Central"/>
</dbReference>
<dbReference type="GO" id="GO:0034605">
    <property type="term" value="P:cellular response to heat"/>
    <property type="evidence" value="ECO:0000318"/>
    <property type="project" value="GO_Central"/>
</dbReference>
<dbReference type="GO" id="GO:0006457">
    <property type="term" value="P:protein folding"/>
    <property type="evidence" value="ECO:0000318"/>
    <property type="project" value="GO_Central"/>
</dbReference>
<dbReference type="GO" id="GO:0050821">
    <property type="term" value="P:protein stabilization"/>
    <property type="evidence" value="ECO:0000318"/>
    <property type="project" value="GO_Central"/>
</dbReference>
<dbReference type="CDD" id="cd16927">
    <property type="entry name" value="HATPase_Hsp90-like"/>
    <property type="match status" value="1"/>
</dbReference>
<dbReference type="FunFam" id="3.40.50.11260:FF:000001">
    <property type="entry name" value="Heat shock protein 90 alpha"/>
    <property type="match status" value="1"/>
</dbReference>
<dbReference type="FunFam" id="3.30.565.10:FF:000204">
    <property type="entry name" value="Heat shock protein HSP 90-beta"/>
    <property type="match status" value="1"/>
</dbReference>
<dbReference type="Gene3D" id="3.30.230.80">
    <property type="match status" value="1"/>
</dbReference>
<dbReference type="Gene3D" id="3.40.50.11260">
    <property type="match status" value="1"/>
</dbReference>
<dbReference type="Gene3D" id="1.20.120.790">
    <property type="entry name" value="Heat shock protein 90, C-terminal domain"/>
    <property type="match status" value="1"/>
</dbReference>
<dbReference type="Gene3D" id="3.30.565.10">
    <property type="entry name" value="Histidine kinase-like ATPase, C-terminal domain"/>
    <property type="match status" value="1"/>
</dbReference>
<dbReference type="InterPro" id="IPR036890">
    <property type="entry name" value="HATPase_C_sf"/>
</dbReference>
<dbReference type="InterPro" id="IPR037196">
    <property type="entry name" value="HSP90_C"/>
</dbReference>
<dbReference type="InterPro" id="IPR001404">
    <property type="entry name" value="Hsp90_fam"/>
</dbReference>
<dbReference type="InterPro" id="IPR020575">
    <property type="entry name" value="Hsp90_N"/>
</dbReference>
<dbReference type="InterPro" id="IPR020568">
    <property type="entry name" value="Ribosomal_Su5_D2-typ_SF"/>
</dbReference>
<dbReference type="PANTHER" id="PTHR11528">
    <property type="entry name" value="HEAT SHOCK PROTEIN 90 FAMILY MEMBER"/>
    <property type="match status" value="1"/>
</dbReference>
<dbReference type="Pfam" id="PF00183">
    <property type="entry name" value="HSP90"/>
    <property type="match status" value="2"/>
</dbReference>
<dbReference type="PIRSF" id="PIRSF002583">
    <property type="entry name" value="Hsp90"/>
    <property type="match status" value="1"/>
</dbReference>
<dbReference type="PRINTS" id="PR00775">
    <property type="entry name" value="HEATSHOCK90"/>
</dbReference>
<dbReference type="SMART" id="SM00387">
    <property type="entry name" value="HATPase_c"/>
    <property type="match status" value="1"/>
</dbReference>
<dbReference type="SUPFAM" id="SSF55874">
    <property type="entry name" value="ATPase domain of HSP90 chaperone/DNA topoisomerase II/histidine kinase"/>
    <property type="match status" value="1"/>
</dbReference>
<dbReference type="SUPFAM" id="SSF110942">
    <property type="entry name" value="HSP90 C-terminal domain"/>
    <property type="match status" value="1"/>
</dbReference>
<dbReference type="SUPFAM" id="SSF54211">
    <property type="entry name" value="Ribosomal protein S5 domain 2-like"/>
    <property type="match status" value="1"/>
</dbReference>
<organism>
    <name type="scientific">Homo sapiens</name>
    <name type="common">Human</name>
    <dbReference type="NCBI Taxonomy" id="9606"/>
    <lineage>
        <taxon>Eukaryota</taxon>
        <taxon>Metazoa</taxon>
        <taxon>Chordata</taxon>
        <taxon>Craniata</taxon>
        <taxon>Vertebrata</taxon>
        <taxon>Euteleostomi</taxon>
        <taxon>Mammalia</taxon>
        <taxon>Eutheria</taxon>
        <taxon>Euarchontoglires</taxon>
        <taxon>Primates</taxon>
        <taxon>Haplorrhini</taxon>
        <taxon>Catarrhini</taxon>
        <taxon>Hominidae</taxon>
        <taxon>Homo</taxon>
    </lineage>
</organism>
<reference key="1">
    <citation type="journal article" date="2005" name="Genomics">
        <title>The HSP90 family of genes in the human genome: insights into their divergence and evolution.</title>
        <authorList>
            <person name="Chen B."/>
            <person name="Piel W.H."/>
            <person name="Gui L."/>
            <person name="Bruford E."/>
            <person name="Monteiro A."/>
        </authorList>
    </citation>
    <scope>NUCLEOTIDE SEQUENCE [MRNA]</scope>
</reference>
<gene>
    <name type="primary">HSP90AB4P</name>
</gene>
<keyword id="KW-0067">ATP-binding</keyword>
<keyword id="KW-0143">Chaperone</keyword>
<keyword id="KW-0963">Cytoplasm</keyword>
<keyword id="KW-0547">Nucleotide-binding</keyword>
<keyword id="KW-1267">Proteomics identification</keyword>
<keyword id="KW-1185">Reference proteome</keyword>
<keyword id="KW-0346">Stress response</keyword>
<protein>
    <recommendedName>
        <fullName>Putative heat shock protein HSP 90-beta 4</fullName>
    </recommendedName>
</protein>